<reference key="1">
    <citation type="journal article" date="2001" name="Nature">
        <title>Complete genome sequence of a multiple drug resistant Salmonella enterica serovar Typhi CT18.</title>
        <authorList>
            <person name="Parkhill J."/>
            <person name="Dougan G."/>
            <person name="James K.D."/>
            <person name="Thomson N.R."/>
            <person name="Pickard D."/>
            <person name="Wain J."/>
            <person name="Churcher C.M."/>
            <person name="Mungall K.L."/>
            <person name="Bentley S.D."/>
            <person name="Holden M.T.G."/>
            <person name="Sebaihia M."/>
            <person name="Baker S."/>
            <person name="Basham D."/>
            <person name="Brooks K."/>
            <person name="Chillingworth T."/>
            <person name="Connerton P."/>
            <person name="Cronin A."/>
            <person name="Davis P."/>
            <person name="Davies R.M."/>
            <person name="Dowd L."/>
            <person name="White N."/>
            <person name="Farrar J."/>
            <person name="Feltwell T."/>
            <person name="Hamlin N."/>
            <person name="Haque A."/>
            <person name="Hien T.T."/>
            <person name="Holroyd S."/>
            <person name="Jagels K."/>
            <person name="Krogh A."/>
            <person name="Larsen T.S."/>
            <person name="Leather S."/>
            <person name="Moule S."/>
            <person name="O'Gaora P."/>
            <person name="Parry C."/>
            <person name="Quail M.A."/>
            <person name="Rutherford K.M."/>
            <person name="Simmonds M."/>
            <person name="Skelton J."/>
            <person name="Stevens K."/>
            <person name="Whitehead S."/>
            <person name="Barrell B.G."/>
        </authorList>
    </citation>
    <scope>NUCLEOTIDE SEQUENCE [LARGE SCALE GENOMIC DNA]</scope>
    <source>
        <strain>CT18</strain>
    </source>
</reference>
<reference key="2">
    <citation type="journal article" date="2003" name="J. Bacteriol.">
        <title>Comparative genomics of Salmonella enterica serovar Typhi strains Ty2 and CT18.</title>
        <authorList>
            <person name="Deng W."/>
            <person name="Liou S.-R."/>
            <person name="Plunkett G. III"/>
            <person name="Mayhew G.F."/>
            <person name="Rose D.J."/>
            <person name="Burland V."/>
            <person name="Kodoyianni V."/>
            <person name="Schwartz D.C."/>
            <person name="Blattner F.R."/>
        </authorList>
    </citation>
    <scope>NUCLEOTIDE SEQUENCE [LARGE SCALE GENOMIC DNA]</scope>
    <source>
        <strain>ATCC 700931 / Ty2</strain>
    </source>
</reference>
<protein>
    <recommendedName>
        <fullName evidence="1">Surface composition regulator</fullName>
    </recommendedName>
</protein>
<proteinExistence type="inferred from homology"/>
<feature type="chain" id="PRO_0000071602" description="Surface composition regulator">
    <location>
        <begin position="1"/>
        <end position="67"/>
    </location>
</feature>
<evidence type="ECO:0000255" key="1">
    <source>
        <dbReference type="HAMAP-Rule" id="MF_00525"/>
    </source>
</evidence>
<dbReference type="EMBL" id="AL513382">
    <property type="protein sequence ID" value="CAD07722.1"/>
    <property type="molecule type" value="Genomic_DNA"/>
</dbReference>
<dbReference type="EMBL" id="AE014613">
    <property type="protein sequence ID" value="AAO70660.1"/>
    <property type="molecule type" value="Genomic_DNA"/>
</dbReference>
<dbReference type="RefSeq" id="NP_457588.1">
    <property type="nucleotide sequence ID" value="NC_003198.1"/>
</dbReference>
<dbReference type="SMR" id="P58615"/>
<dbReference type="STRING" id="220341.gene:17587231"/>
<dbReference type="KEGG" id="stt:t3117"/>
<dbReference type="KEGG" id="sty:STY3376"/>
<dbReference type="PATRIC" id="fig|220341.7.peg.3436"/>
<dbReference type="eggNOG" id="ENOG5032ZQX">
    <property type="taxonomic scope" value="Bacteria"/>
</dbReference>
<dbReference type="HOGENOM" id="CLU_185971_0_0_6"/>
<dbReference type="OMA" id="HRSWFCK"/>
<dbReference type="Proteomes" id="UP000000541">
    <property type="component" value="Chromosome"/>
</dbReference>
<dbReference type="Proteomes" id="UP000002670">
    <property type="component" value="Chromosome"/>
</dbReference>
<dbReference type="GO" id="GO:1902201">
    <property type="term" value="P:negative regulation of bacterial-type flagellum-dependent cell motility"/>
    <property type="evidence" value="ECO:0007669"/>
    <property type="project" value="UniProtKB-UniRule"/>
</dbReference>
<dbReference type="GO" id="GO:1900191">
    <property type="term" value="P:negative regulation of single-species biofilm formation"/>
    <property type="evidence" value="ECO:0007669"/>
    <property type="project" value="UniProtKB-UniRule"/>
</dbReference>
<dbReference type="Gene3D" id="1.20.970.20">
    <property type="entry name" value="Glycogen synthesis protein GlgS"/>
    <property type="match status" value="1"/>
</dbReference>
<dbReference type="HAMAP" id="MF_00525">
    <property type="entry name" value="GlgS"/>
    <property type="match status" value="1"/>
</dbReference>
<dbReference type="InterPro" id="IPR015065">
    <property type="entry name" value="GlgS"/>
</dbReference>
<dbReference type="InterPro" id="IPR036295">
    <property type="entry name" value="GlgS_sf"/>
</dbReference>
<dbReference type="NCBIfam" id="NF002793">
    <property type="entry name" value="PRK02922.1"/>
    <property type="match status" value="1"/>
</dbReference>
<dbReference type="Pfam" id="PF08971">
    <property type="entry name" value="GlgS"/>
    <property type="match status" value="1"/>
</dbReference>
<dbReference type="SUPFAM" id="SSF109747">
    <property type="entry name" value="Glycogen synthesis protein GlgS"/>
    <property type="match status" value="1"/>
</dbReference>
<gene>
    <name type="primary">glgS</name>
    <name type="ordered locus">STY3376</name>
    <name type="ordered locus">t3117</name>
</gene>
<accession>P58615</accession>
<organism>
    <name type="scientific">Salmonella typhi</name>
    <dbReference type="NCBI Taxonomy" id="90370"/>
    <lineage>
        <taxon>Bacteria</taxon>
        <taxon>Pseudomonadati</taxon>
        <taxon>Pseudomonadota</taxon>
        <taxon>Gammaproteobacteria</taxon>
        <taxon>Enterobacterales</taxon>
        <taxon>Enterobacteriaceae</taxon>
        <taxon>Salmonella</taxon>
    </lineage>
</organism>
<comment type="function">
    <text evidence="1">Major determinant of cell surface composition. Negatively regulates motility, adhesion and synthesis of biofilm exopolysaccharides.</text>
</comment>
<comment type="similarity">
    <text evidence="1">Belongs to the GlgS family.</text>
</comment>
<name>GLGS_SALTI</name>
<sequence>MNNNNVYSLNNFDFLARSFARMQAEGRPVDIQAVTGNMDEEHRDWFCKRYALYCQQATQAKKLELEH</sequence>